<name>US02_SUHVN</name>
<reference key="1">
    <citation type="journal article" date="1990" name="J. Gen. Virol.">
        <title>Identification of two genes in the unique short region of pseudorabies virus; comparison with herpes simplex virus and varicella-zoster virus.</title>
        <authorList>
            <person name="van Zijl M."/>
            <person name="van der Gulden H."/>
            <person name="de Wind N."/>
            <person name="Gielkens A."/>
            <person name="Berns A."/>
        </authorList>
    </citation>
    <scope>NUCLEOTIDE SEQUENCE [GENOMIC DNA]</scope>
</reference>
<accession>P24382</accession>
<proteinExistence type="inferred from homology"/>
<comment type="similarity">
    <text evidence="2">Belongs to the herpesviridae US2 family.</text>
</comment>
<evidence type="ECO:0000256" key="1">
    <source>
        <dbReference type="SAM" id="MobiDB-lite"/>
    </source>
</evidence>
<evidence type="ECO:0000305" key="2"/>
<sequence length="256" mass="27758">MGVTAITVVTLMDGSGRIPAFVGEAHPDLWKVLTEWCYASLVQQRRAADEDTPRQHVVLRSSEIAPGSLALLPRATRPVVRTRSDPTAPFYITTETHELTRRPPADGSKPGEPLRISPPPRLDTEWSSVINGIQYLNSGARGTAPIHLWILGAADLCDQVLLAASRSTAAGAPGAPTGARLTRRRPGLTDADALDVIVAGIPATRAMFARVHNRSWRHAGEWTEALHAQIVTRGDVRRRRGGRGNGRERAPRCTIS</sequence>
<protein>
    <recommendedName>
        <fullName>Protein US2 homolog</fullName>
    </recommendedName>
    <alternativeName>
        <fullName>28 kDa protein</fullName>
    </alternativeName>
</protein>
<dbReference type="EMBL" id="D10452">
    <property type="protein sequence ID" value="BAA01246.1"/>
    <property type="molecule type" value="Genomic_DNA"/>
</dbReference>
<dbReference type="PIR" id="B36654">
    <property type="entry name" value="WMBEPN"/>
</dbReference>
<dbReference type="KEGG" id="vg:2952553"/>
<dbReference type="InterPro" id="IPR003485">
    <property type="entry name" value="Herpes_US2_varicellovirus"/>
</dbReference>
<dbReference type="Pfam" id="PF02476">
    <property type="entry name" value="US2"/>
    <property type="match status" value="1"/>
</dbReference>
<organismHost>
    <name type="scientific">Sus scrofa</name>
    <name type="common">Pig</name>
    <dbReference type="NCBI Taxonomy" id="9823"/>
</organismHost>
<organism>
    <name type="scientific">Suid herpesvirus 1 (strain NIA-3)</name>
    <name type="common">SuHV-1</name>
    <name type="synonym">Pseudorabies virus (strain NIA-3)</name>
    <dbReference type="NCBI Taxonomy" id="10349"/>
    <lineage>
        <taxon>Viruses</taxon>
        <taxon>Duplodnaviria</taxon>
        <taxon>Heunggongvirae</taxon>
        <taxon>Peploviricota</taxon>
        <taxon>Herviviricetes</taxon>
        <taxon>Herpesvirales</taxon>
        <taxon>Orthoherpesviridae</taxon>
        <taxon>Alphaherpesvirinae</taxon>
        <taxon>Varicellovirus</taxon>
        <taxon>Varicellovirus suidalpha1</taxon>
        <taxon>Suid herpesvirus 1</taxon>
    </lineage>
</organism>
<feature type="chain" id="PRO_0000116131" description="Protein US2 homolog">
    <location>
        <begin position="1"/>
        <end position="256"/>
    </location>
</feature>
<feature type="region of interest" description="Disordered" evidence="1">
    <location>
        <begin position="100"/>
        <end position="120"/>
    </location>
</feature>
<feature type="region of interest" description="Disordered" evidence="1">
    <location>
        <begin position="167"/>
        <end position="186"/>
    </location>
</feature>
<feature type="region of interest" description="Disordered" evidence="1">
    <location>
        <begin position="236"/>
        <end position="256"/>
    </location>
</feature>
<feature type="compositionally biased region" description="Low complexity" evidence="1">
    <location>
        <begin position="167"/>
        <end position="180"/>
    </location>
</feature>
<feature type="compositionally biased region" description="Basic and acidic residues" evidence="1">
    <location>
        <begin position="245"/>
        <end position="256"/>
    </location>
</feature>
<gene>
    <name type="primary">28K</name>
</gene>